<accession>Q7VAP4</accession>
<name>AMPA_PROMA</name>
<evidence type="ECO:0000255" key="1">
    <source>
        <dbReference type="HAMAP-Rule" id="MF_00181"/>
    </source>
</evidence>
<organism>
    <name type="scientific">Prochlorococcus marinus (strain SARG / CCMP1375 / SS120)</name>
    <dbReference type="NCBI Taxonomy" id="167539"/>
    <lineage>
        <taxon>Bacteria</taxon>
        <taxon>Bacillati</taxon>
        <taxon>Cyanobacteriota</taxon>
        <taxon>Cyanophyceae</taxon>
        <taxon>Synechococcales</taxon>
        <taxon>Prochlorococcaceae</taxon>
        <taxon>Prochlorococcus</taxon>
    </lineage>
</organism>
<comment type="function">
    <text evidence="1">Presumably involved in the processing and regular turnover of intracellular proteins. Catalyzes the removal of unsubstituted N-terminal amino acids from various peptides.</text>
</comment>
<comment type="catalytic activity">
    <reaction evidence="1">
        <text>Release of an N-terminal amino acid, Xaa-|-Yaa-, in which Xaa is preferably Leu, but may be other amino acids including Pro although not Arg or Lys, and Yaa may be Pro. Amino acid amides and methyl esters are also readily hydrolyzed, but rates on arylamides are exceedingly low.</text>
        <dbReference type="EC" id="3.4.11.1"/>
    </reaction>
</comment>
<comment type="catalytic activity">
    <reaction evidence="1">
        <text>Release of an N-terminal amino acid, preferentially leucine, but not glutamic or aspartic acids.</text>
        <dbReference type="EC" id="3.4.11.10"/>
    </reaction>
</comment>
<comment type="cofactor">
    <cofactor evidence="1">
        <name>Mn(2+)</name>
        <dbReference type="ChEBI" id="CHEBI:29035"/>
    </cofactor>
    <text evidence="1">Binds 2 manganese ions per subunit.</text>
</comment>
<comment type="subcellular location">
    <subcellularLocation>
        <location evidence="1">Cytoplasm</location>
    </subcellularLocation>
</comment>
<comment type="similarity">
    <text evidence="1">Belongs to the peptidase M17 family.</text>
</comment>
<feature type="chain" id="PRO_0000165779" description="Probable cytosol aminopeptidase">
    <location>
        <begin position="1"/>
        <end position="496"/>
    </location>
</feature>
<feature type="active site" evidence="1">
    <location>
        <position position="269"/>
    </location>
</feature>
<feature type="active site" evidence="1">
    <location>
        <position position="345"/>
    </location>
</feature>
<feature type="binding site" evidence="1">
    <location>
        <position position="257"/>
    </location>
    <ligand>
        <name>Mn(2+)</name>
        <dbReference type="ChEBI" id="CHEBI:29035"/>
        <label>2</label>
    </ligand>
</feature>
<feature type="binding site" evidence="1">
    <location>
        <position position="262"/>
    </location>
    <ligand>
        <name>Mn(2+)</name>
        <dbReference type="ChEBI" id="CHEBI:29035"/>
        <label>1</label>
    </ligand>
</feature>
<feature type="binding site" evidence="1">
    <location>
        <position position="262"/>
    </location>
    <ligand>
        <name>Mn(2+)</name>
        <dbReference type="ChEBI" id="CHEBI:29035"/>
        <label>2</label>
    </ligand>
</feature>
<feature type="binding site" evidence="1">
    <location>
        <position position="281"/>
    </location>
    <ligand>
        <name>Mn(2+)</name>
        <dbReference type="ChEBI" id="CHEBI:29035"/>
        <label>2</label>
    </ligand>
</feature>
<feature type="binding site" evidence="1">
    <location>
        <position position="341"/>
    </location>
    <ligand>
        <name>Mn(2+)</name>
        <dbReference type="ChEBI" id="CHEBI:29035"/>
        <label>1</label>
    </ligand>
</feature>
<feature type="binding site" evidence="1">
    <location>
        <position position="343"/>
    </location>
    <ligand>
        <name>Mn(2+)</name>
        <dbReference type="ChEBI" id="CHEBI:29035"/>
        <label>1</label>
    </ligand>
</feature>
<feature type="binding site" evidence="1">
    <location>
        <position position="343"/>
    </location>
    <ligand>
        <name>Mn(2+)</name>
        <dbReference type="ChEBI" id="CHEBI:29035"/>
        <label>2</label>
    </ligand>
</feature>
<dbReference type="EC" id="3.4.11.1" evidence="1"/>
<dbReference type="EC" id="3.4.11.10" evidence="1"/>
<dbReference type="EMBL" id="AE017126">
    <property type="protein sequence ID" value="AAQ00457.1"/>
    <property type="molecule type" value="Genomic_DNA"/>
</dbReference>
<dbReference type="RefSeq" id="NP_875804.1">
    <property type="nucleotide sequence ID" value="NC_005042.1"/>
</dbReference>
<dbReference type="RefSeq" id="WP_011125564.1">
    <property type="nucleotide sequence ID" value="NC_005042.1"/>
</dbReference>
<dbReference type="SMR" id="Q7VAP4"/>
<dbReference type="STRING" id="167539.Pro_1413"/>
<dbReference type="EnsemblBacteria" id="AAQ00457">
    <property type="protein sequence ID" value="AAQ00457"/>
    <property type="gene ID" value="Pro_1413"/>
</dbReference>
<dbReference type="KEGG" id="pma:Pro_1413"/>
<dbReference type="PATRIC" id="fig|167539.5.peg.1479"/>
<dbReference type="eggNOG" id="COG0260">
    <property type="taxonomic scope" value="Bacteria"/>
</dbReference>
<dbReference type="HOGENOM" id="CLU_013734_5_1_3"/>
<dbReference type="OrthoDB" id="9809354at2"/>
<dbReference type="Proteomes" id="UP000001420">
    <property type="component" value="Chromosome"/>
</dbReference>
<dbReference type="GO" id="GO:0005737">
    <property type="term" value="C:cytoplasm"/>
    <property type="evidence" value="ECO:0007669"/>
    <property type="project" value="UniProtKB-SubCell"/>
</dbReference>
<dbReference type="GO" id="GO:0030145">
    <property type="term" value="F:manganese ion binding"/>
    <property type="evidence" value="ECO:0007669"/>
    <property type="project" value="UniProtKB-UniRule"/>
</dbReference>
<dbReference type="GO" id="GO:0070006">
    <property type="term" value="F:metalloaminopeptidase activity"/>
    <property type="evidence" value="ECO:0007669"/>
    <property type="project" value="InterPro"/>
</dbReference>
<dbReference type="GO" id="GO:0006508">
    <property type="term" value="P:proteolysis"/>
    <property type="evidence" value="ECO:0007669"/>
    <property type="project" value="UniProtKB-KW"/>
</dbReference>
<dbReference type="CDD" id="cd00433">
    <property type="entry name" value="Peptidase_M17"/>
    <property type="match status" value="1"/>
</dbReference>
<dbReference type="Gene3D" id="3.40.220.10">
    <property type="entry name" value="Leucine Aminopeptidase, subunit E, domain 1"/>
    <property type="match status" value="1"/>
</dbReference>
<dbReference type="Gene3D" id="3.40.630.10">
    <property type="entry name" value="Zn peptidases"/>
    <property type="match status" value="1"/>
</dbReference>
<dbReference type="HAMAP" id="MF_00181">
    <property type="entry name" value="Cytosol_peptidase_M17"/>
    <property type="match status" value="1"/>
</dbReference>
<dbReference type="InterPro" id="IPR011356">
    <property type="entry name" value="Leucine_aapep/pepB"/>
</dbReference>
<dbReference type="InterPro" id="IPR043472">
    <property type="entry name" value="Macro_dom-like"/>
</dbReference>
<dbReference type="InterPro" id="IPR000819">
    <property type="entry name" value="Peptidase_M17_C"/>
</dbReference>
<dbReference type="InterPro" id="IPR023042">
    <property type="entry name" value="Peptidase_M17_leu_NH2_pept"/>
</dbReference>
<dbReference type="InterPro" id="IPR008283">
    <property type="entry name" value="Peptidase_M17_N"/>
</dbReference>
<dbReference type="NCBIfam" id="NF002073">
    <property type="entry name" value="PRK00913.1-2"/>
    <property type="match status" value="1"/>
</dbReference>
<dbReference type="NCBIfam" id="NF002076">
    <property type="entry name" value="PRK00913.2-3"/>
    <property type="match status" value="1"/>
</dbReference>
<dbReference type="PANTHER" id="PTHR11963:SF23">
    <property type="entry name" value="CYTOSOL AMINOPEPTIDASE"/>
    <property type="match status" value="1"/>
</dbReference>
<dbReference type="PANTHER" id="PTHR11963">
    <property type="entry name" value="LEUCINE AMINOPEPTIDASE-RELATED"/>
    <property type="match status" value="1"/>
</dbReference>
<dbReference type="Pfam" id="PF00883">
    <property type="entry name" value="Peptidase_M17"/>
    <property type="match status" value="1"/>
</dbReference>
<dbReference type="Pfam" id="PF02789">
    <property type="entry name" value="Peptidase_M17_N"/>
    <property type="match status" value="1"/>
</dbReference>
<dbReference type="PRINTS" id="PR00481">
    <property type="entry name" value="LAMNOPPTDASE"/>
</dbReference>
<dbReference type="SUPFAM" id="SSF52949">
    <property type="entry name" value="Macro domain-like"/>
    <property type="match status" value="1"/>
</dbReference>
<dbReference type="SUPFAM" id="SSF53187">
    <property type="entry name" value="Zn-dependent exopeptidases"/>
    <property type="match status" value="1"/>
</dbReference>
<dbReference type="PROSITE" id="PS00631">
    <property type="entry name" value="CYTOSOL_AP"/>
    <property type="match status" value="1"/>
</dbReference>
<sequence>MQISLYQKNLADWTGSIIAVGLLEGQIQEQLSLLEEICDYDSLLTHVEEKDFSAKAGELIKLEILGKSLEKIILIGLGKPEALSIDDLREGAALASRASIGSKGKIGILFPWEPFNPISASKAVAEAMRLSIFKDLRFQSEPKPQNNPQSIDLIGLPESNHNIIKEVDPICSGVELARELVAAPPNELTPAALAEKAVEIAKKFKWNYKILNRKECEKEGMGAYLAVSQGSDLEPQFIHLTYKPNGQIKRRIAMVGKGLTFDSGGYNLKVGASQIEMMKYDMGGSAAVIGAARAIGELAPVDTEVHFIVAACENMVNGSAVHPGDIIKASNGTTIEINNTDAEGRLTLADALIYACKLEPDAIVDLATLTGACVIALGEEIAGLWVESDELANELKDASSACGEKLWRMPLQASYKEGLKSMLADIKNTGPRSGGSITAALFLKEFISNGIKWAHIDIAGTCWTDKDRGIDPAGATGFGVRTLVNWACKSNPDIEK</sequence>
<proteinExistence type="inferred from homology"/>
<keyword id="KW-0031">Aminopeptidase</keyword>
<keyword id="KW-0963">Cytoplasm</keyword>
<keyword id="KW-0378">Hydrolase</keyword>
<keyword id="KW-0464">Manganese</keyword>
<keyword id="KW-0479">Metal-binding</keyword>
<keyword id="KW-0645">Protease</keyword>
<keyword id="KW-1185">Reference proteome</keyword>
<gene>
    <name evidence="1" type="primary">pepA</name>
    <name type="synonym">pepB</name>
    <name type="ordered locus">Pro_1413</name>
</gene>
<reference key="1">
    <citation type="journal article" date="2003" name="Proc. Natl. Acad. Sci. U.S.A.">
        <title>Genome sequence of the cyanobacterium Prochlorococcus marinus SS120, a nearly minimal oxyphototrophic genome.</title>
        <authorList>
            <person name="Dufresne A."/>
            <person name="Salanoubat M."/>
            <person name="Partensky F."/>
            <person name="Artiguenave F."/>
            <person name="Axmann I.M."/>
            <person name="Barbe V."/>
            <person name="Duprat S."/>
            <person name="Galperin M.Y."/>
            <person name="Koonin E.V."/>
            <person name="Le Gall F."/>
            <person name="Makarova K.S."/>
            <person name="Ostrowski M."/>
            <person name="Oztas S."/>
            <person name="Robert C."/>
            <person name="Rogozin I.B."/>
            <person name="Scanlan D.J."/>
            <person name="Tandeau de Marsac N."/>
            <person name="Weissenbach J."/>
            <person name="Wincker P."/>
            <person name="Wolf Y.I."/>
            <person name="Hess W.R."/>
        </authorList>
    </citation>
    <scope>NUCLEOTIDE SEQUENCE [LARGE SCALE GENOMIC DNA]</scope>
    <source>
        <strain>SARG / CCMP1375 / SS120</strain>
    </source>
</reference>
<protein>
    <recommendedName>
        <fullName evidence="1">Probable cytosol aminopeptidase</fullName>
        <ecNumber evidence="1">3.4.11.1</ecNumber>
    </recommendedName>
    <alternativeName>
        <fullName evidence="1">Leucine aminopeptidase</fullName>
        <shortName evidence="1">LAP</shortName>
        <ecNumber evidence="1">3.4.11.10</ecNumber>
    </alternativeName>
    <alternativeName>
        <fullName evidence="1">Leucyl aminopeptidase</fullName>
    </alternativeName>
</protein>